<protein>
    <recommendedName>
        <fullName evidence="5">Centrin-binding protein SFI1</fullName>
        <shortName evidence="4">TgSFI1</shortName>
    </recommendedName>
</protein>
<evidence type="ECO:0000255" key="1">
    <source>
        <dbReference type="PROSITE-ProRule" id="PRU00498"/>
    </source>
</evidence>
<evidence type="ECO:0000269" key="2">
    <source>
    </source>
</evidence>
<evidence type="ECO:0000269" key="3">
    <source>
    </source>
</evidence>
<evidence type="ECO:0000303" key="4">
    <source>
    </source>
</evidence>
<evidence type="ECO:0000305" key="5"/>
<evidence type="ECO:0000312" key="6">
    <source>
        <dbReference type="EMBL" id="EPT28707.1"/>
    </source>
</evidence>
<evidence type="ECO:0000312" key="7">
    <source>
        <dbReference type="Proteomes" id="UP000001529"/>
    </source>
</evidence>
<proteinExistence type="evidence at protein level"/>
<accession>S8F258</accession>
<accession>A0A0N5EB83</accession>
<accession>V4ZR91</accession>
<dbReference type="EMBL" id="KE138831">
    <property type="protein sequence ID" value="EPT28707.1"/>
    <property type="molecule type" value="Genomic_DNA"/>
</dbReference>
<dbReference type="RefSeq" id="XP_018636745.1">
    <property type="nucleotide sequence ID" value="XM_018781708.1"/>
</dbReference>
<dbReference type="EnsemblProtists" id="TGME49_274000-t26_1">
    <property type="protein sequence ID" value="TGME49_274000-t26_1"/>
    <property type="gene ID" value="TGME49_274000"/>
</dbReference>
<dbReference type="GeneID" id="7895008"/>
<dbReference type="KEGG" id="tgo:TGME49_274000"/>
<dbReference type="VEuPathDB" id="ToxoDB:TGME49_274000"/>
<dbReference type="OrthoDB" id="208477at2759"/>
<dbReference type="Proteomes" id="UP000001529">
    <property type="component" value="Chromosome VIII"/>
</dbReference>
<keyword id="KW-0131">Cell cycle</keyword>
<keyword id="KW-0132">Cell division</keyword>
<keyword id="KW-0963">Cytoplasm</keyword>
<keyword id="KW-0206">Cytoskeleton</keyword>
<keyword id="KW-0325">Glycoprotein</keyword>
<keyword id="KW-1185">Reference proteome</keyword>
<comment type="function">
    <text evidence="2">Part of the centrosome outer core complex (PubMed:25734885). Plays a role in the initiation and assembly of daughter buds (PubMed:25734885).</text>
</comment>
<comment type="subunit">
    <text evidence="3">Interacts with CEN1.</text>
</comment>
<comment type="subcellular location">
    <subcellularLocation>
        <location evidence="2">Cytoplasm</location>
        <location evidence="2">Cytoskeleton</location>
        <location evidence="2">Microtubule organizing center</location>
        <location evidence="2">Centrosome</location>
    </subcellularLocation>
    <text evidence="2">Localizes to centrosome outer core.</text>
</comment>
<sequence length="3903" mass="438340">MLAPTDWTDAEILAAAAQAAREEFFGAQRARVGDTGAQDEARGGGVPFLLVRKQLVRLLDEMGVGLQSTRGLQVYRHLLQHVVQATVGECGHDMILFSEESRALFMPPVNGAGGTAASRLANANSWSLASSPSVVSSGPAPVLVSASPGPSGLSDRSFNETTPRVSASSSSAPSSSSSSSPVSFSPSSGPVSSSSTFPPSSSSACPSSSSSSSSSSFSSCSSCSSSPLASATARVQAFAARRKAGEDHRLLLDALREWRRWAAREARLRSLFWTLSSRRRLRALRRSLHAWRANFIEALSRREDSNEEAADGQRTAAVCRRSLLAWSAGVETQSAEARGQVARAAPAEEGCQRYEALQTSFRSWREATVAQREAERQRRLLSAFKAWKESHLSRRVRKQVLEHRAFAVQKSLQDRHMRGVWRYWRAAAEARSRAGAAARETLERTRFRRVFNALLAETRDRQTRRGAAVAAAEATVRERRVRRAFRAWRKVSILRRPPFAAGHSQFSSPQIVCLLKAVSALRREGASEEPGHARSLGEALLDAATARQRRERAQRRGDRDGEETELGRDAQVDLEDAALLTLIPLHGIDLHLPKLSTAAPLMAQALRQHYLRHSFLQWRAEALRQRQFRQAARVSRLARVFRAWREETQKAKGEAAASSAVYAAQKTRILREAWRSWRMRFRRYVLFRTQCRSLQDLRLLHLKSLAFRGWCTFHRERQREAQSVSAVKDRAAAALQRAAWSRWQEAWHLRRRRRAMAEAAALLREKTLLAKGLRGLKRQRASAASLRDAAAALRQERLGLALAVWWRWAARRGAFQELCELQRAKRARRNLRRLLLAWRSLAKRMETRRDAVWRLAAVVDRIRVRRGFCGWNALRMQERKREEAASRLQRTLRDARIRAAWAAWRSAQSLACKEAELRKESEDSLKRRVFKQWQAAAAEHATLQLHLRGQLLCWRLSRLLHRWRRLATLFRLGLLQKSRSRLYVLRRCQEAWLARLAERSEERRKEARAESLCLTLRLRAAQRCLLAWQETAVAVAARRRKGDTFRAQLHRARLDAAWTTWRRGVEELHRRRRLLLGVEKIREKILVAQSLTRWKCAAALLRKEALATQARRQALLRRALQAWTLWRRRRTEKKDEAERVRACLNEEGSAKRAGERQRKKETLAAWHALTEKRFEERRAFSRVEAIGDRLSLRRGFVTWRLWALRLAGLSQATVRLDVWRRRCLLRISYEALSQHRDRVKEMELASLAHLSQLRAQTLRRSFCSWRTQFAALRREAEVLARRRSAAARAEAHAALACKRRSFLAWLKALAAKLALKKRLFVLLKERREALEARTLRAWRRLAKKKGDLRESLEMFSDSRRSQCLRRVFAAVFATVSRRRLVRVRFLFALGLLAPSPDFSVSSAESSHPHSRSLLLPLSPLGPAEEASLRLLWGPALPAPLLAPRLIPRLPGPSRAFESAKECPSVLASLPLVPRLIVWSAQPHMLHLLLLQPAIAESLARQAGQQPQRSAAFFEPLPVSRARLALFSDADAEARTRVWGLPAASLGGEETPGGDKGNGALPLAALASARSRPPSVWSCLTPSTCTPHTSLSVPLSGFEAPPPRPGRTFFRTETGDTLGSARSQFRGRSASPLHSDGPSGREAGSRRHRSATKERDREDREEIDELLLADKKSSKSLERLLRCFSAKQGPEGPLKENAELWGEQAVLADSVRRMRPQNDLQALLLAQVNLSRRPSVQRPAPLFLPSAMGPDAAVSDALDASQDSVESDGSAGGLSVHSEETPLPSKNWREEIPVDLLATAWQFARLLQAALRAWLLQAQRHKAQRLRETGLVAGFRIQSRSRLLAACWGLWRSTKSSLEARTRTKAQRLAWGIQRRVLQAWFLCATVDASAVLRAEAFAETRRSAKTHAMLEAWRGVATKRRQEREQVEAWRQHRARERKQELFALWTHLASVNRAGAQLYVHRRAATLNKVFATWRTSTLRSLALDKLQRIVSRPGLFLGFSLLRIWSLTRACSLRLAAQCLDSWRQHTESRKRLAGLLVYVQTVHKVSRLQQHFSAWLLVQQRRRRLLLLHRTAEAAAFLLPLHRIFSRWRASALDRQAQRDSLLGRFLAQRQRPFLALDPEESAEAKDAGRLGTTPSCAYWARWRIEETWKVWRRRFRLRTLLRRRATRCARTALSALRQAVERRRALEAFERKRRQRLLQRATVAWQVYVQRRLLKQQRTAHAIERYNTHTLRQAFSKCRWLLQRLQWERGVIEVSQAKANRRVCRMTLQALQAYAEARVAERERLDGCRAARSSHLLRMHFEKWSFLLRATHHAASLSRKTSFLLWTRAFRRSRGAALLVAVQRRVEERQTRRGLAALQAESEAFEQIKAFGAETPWLRDAIEEKVSSARASMTFALSSLRLFAAHRVSRRRQARLLAGALASWARLQETDGPRRRLRPYLRHWRGALQYRLHLQAAEEALRRHVEFRRLREVWGAWRHLRREEARGRELLALAEETKKVWALEKGILLLHEHRLQREWMTWCTYRAELFVTDTRHEKARLCVRAWHSWVAKRRELRRRGLEAQEASRLFVLSNAFSALRCAYTRRTALRAAGACVVEKQKRSSLRTAWRGWRKVLVDLLALKPRLEALLARQAFQRVCLAWWGWRMWHQRRKERRQLLGPLSEKARVVRDVQLAAQCFRGWAELAETRATFWRQREGLVEKLVARRLTKETFRAWRLCAREIHFVRSTKAAAANAAALAAAGHGMREMHLPAQAPADRRGRPGPSRETTMSPASSLFSSASVSPTASRRNRRRGGRSGRPRGRDLLSSSLSLSDSQPLERLSQASDRRGGESQTDGDSGDMSETVRRRPGCQRPSEAAPGSPPGGRSKRVHAAAGRRRQGAREILEEREISRLARSAVAWLPRAAERSDEAEERALRRRSASAVFGSRGRDGESGLGEMRSTTGPAGGHRAWESEASGEDTEGEEGPRNLQGQEAEASTSGKKARGTCGLAVSFSLGSPLSSDRPSSPLSVAAHEPPPPPGKTRLHRVSSSLSSPRPRGAHAKETPAGPPSSPSSASSASLRQGPRQLRLQDLLSDSSSSLASAQPAPVFAPQENRGKSKSDSVESPSPLTVATSLLEALSHSHSSALAEAARSLLLQSGARNPDTKPAASSRDLSESDRSKSFSSADSEMDRTATEDSEDDRGPQGGRRGVRRRRSSPVRRGDRSRRVRREEEEETRRRSTRRRRAAESEQLGEEEDVEEVEEEEVEEEEVEEEEGVSGVEVSLVEKRAEERIRVFPRAIREAPPSAFALPSSLSSLFLTSLQGAQGSRSAETQAREEPRVGRVLALAHSLAGSASRFERGGDEDRVEDEGQSVESARLSTASLDAGERDRVPRKGGKRDHPFFFSLMSSTPSLRDQASGGQSSCSSSPASPSSESSVCVGGPRRRAVGAAKEPLGTRDEAKELRANCDLAEEPASLAGGAAAHRPDPQGAALTEKLRRIVALAVANRLQSPAAASEEDTEENEGVEKEGADEEEDVVHSETGGEAENRAERGRLSLISSTLSTTLLLSELAAPQEDEGVPLGSRSAASASHEETGESREEQETTGCERDSPGVAHRLLLHPATFSLARGSLPPISEGATGSRSSPSPDRLAASTQSEAAAEPTETGDSEAELRKLLARLERVEELHRARDFIGAEADDSGALPVANMQSSVDLRSACEAPQDTERQRRRPERMQSPSPPASPSVAPARRLESEAGANRGVPELSVSPVAGAQEFVFEGNPDAAETGNEVAEVQRQERRRAAEAEAAVAQNAEDERTEREPRDEEAASGGQREEEEWLQDIVAVSRRKAAEARARDQRDESERDARKDTESIAGSEELLEEAWKEARAETRNALLEIHREMKGVALYDGDARDASRT</sequence>
<feature type="chain" id="PRO_0000462217" description="Centrin-binding protein SFI1">
    <location>
        <begin position="1"/>
        <end position="3903"/>
    </location>
</feature>
<feature type="glycosylation site" description="N-linked (GlcNAc...) asparagine" evidence="1">
    <location>
        <position position="159"/>
    </location>
</feature>
<feature type="glycosylation site" description="N-linked (GlcNAc...) asparagine" evidence="1">
    <location>
        <position position="1728"/>
    </location>
</feature>
<feature type="mutagenesis site" description="Results in protein instability at 40 degrees Celsius. Decrease in CEN1-containing centrosome outer cores per parasite at 40 degrees Celsius. Absence of budding at 40 degrees Celsius." evidence="2">
    <original>E</original>
    <variation>K</variation>
    <location>
        <position position="1789"/>
    </location>
</feature>
<organism evidence="7">
    <name type="scientific">Toxoplasma gondii (strain ATCC 50611 / Me49)</name>
    <dbReference type="NCBI Taxonomy" id="508771"/>
    <lineage>
        <taxon>Eukaryota</taxon>
        <taxon>Sar</taxon>
        <taxon>Alveolata</taxon>
        <taxon>Apicomplexa</taxon>
        <taxon>Conoidasida</taxon>
        <taxon>Coccidia</taxon>
        <taxon>Eucoccidiorida</taxon>
        <taxon>Eimeriorina</taxon>
        <taxon>Sarcocystidae</taxon>
        <taxon>Toxoplasma</taxon>
    </lineage>
</organism>
<name>SFI1_TOXGM</name>
<gene>
    <name evidence="4" type="primary">SFI1</name>
    <name evidence="6" type="ORF">TGME49_274000</name>
</gene>
<reference evidence="7" key="1">
    <citation type="submission" date="2013-04" db="EMBL/GenBank/DDBJ databases">
        <authorList>
            <person name="Sibley D."/>
            <person name="Venepally P."/>
            <person name="Karamycheva S."/>
            <person name="Hadjithomas M."/>
            <person name="Khan A."/>
            <person name="Brunk B."/>
            <person name="Roos D."/>
            <person name="Caler E."/>
            <person name="Lorenzi H."/>
        </authorList>
    </citation>
    <scope>NUCLEOTIDE SEQUENCE [LARGE SCALE GENOMIC DNA]</scope>
    <source>
        <strain evidence="7">ATCC 50611 / Me49</strain>
    </source>
</reference>
<reference key="2">
    <citation type="journal article" date="2015" name="PLoS Biol.">
        <title>A novel bipartite centrosome coordinates the apicomplexan cell cycle.</title>
        <authorList>
            <person name="Suvorova E.S."/>
            <person name="Francia M."/>
            <person name="Striepen B."/>
            <person name="White M.W."/>
        </authorList>
    </citation>
    <scope>FUNCTION</scope>
    <scope>SUBCELLULAR LOCATION</scope>
    <scope>MUTAGENESIS OF GLU-1789</scope>
</reference>
<reference key="3">
    <citation type="journal article" date="2022" name="Biomolecules">
        <title>Conformational Plasticity of Centrin 1 from Toxoplasma gondii in Binding to the Centrosomal Protein SFI1.</title>
        <authorList>
            <person name="Bombardi L."/>
            <person name="Favretto F."/>
            <person name="Pedretti M."/>
            <person name="Conter C."/>
            <person name="Dominici P."/>
            <person name="Astegno A."/>
        </authorList>
    </citation>
    <scope>INTERACTION WITH CEN1</scope>
</reference>